<evidence type="ECO:0000255" key="1">
    <source>
        <dbReference type="HAMAP-Rule" id="MF_01013"/>
    </source>
</evidence>
<organism>
    <name type="scientific">Yersinia pseudotuberculosis serotype IB (strain PB1/+)</name>
    <dbReference type="NCBI Taxonomy" id="502801"/>
    <lineage>
        <taxon>Bacteria</taxon>
        <taxon>Pseudomonadati</taxon>
        <taxon>Pseudomonadota</taxon>
        <taxon>Gammaproteobacteria</taxon>
        <taxon>Enterobacterales</taxon>
        <taxon>Yersiniaceae</taxon>
        <taxon>Yersinia</taxon>
    </lineage>
</organism>
<gene>
    <name evidence="1" type="primary">hisF</name>
    <name type="ordered locus">YPTS_1665</name>
</gene>
<sequence length="258" mass="28524">MLAKRIIPCLDVKDGQVVKGVQFRNHEIIGDIVPLAQRYAQEGADELVFYDITASSDGRVVDKSWVARVAEVIDIPFCVAGGIKSVEDASQILTFGADKISINSPALADPTLITRLADRYGVQCIVVGIDTWYDTESDSYQVYQFTGDEKRTKATTWQTEDWVKEVQLRGAGEIVLNMMNQDGVRNGYDLRQLQQMRAICHVPLIASGGAGTPEHFLEAFRDADVDGALAASVFHKQIINIGELKKYLSEQGVEIRVC</sequence>
<name>HIS6_YERPB</name>
<feature type="chain" id="PRO_1000135063" description="Imidazole glycerol phosphate synthase subunit HisF">
    <location>
        <begin position="1"/>
        <end position="258"/>
    </location>
</feature>
<feature type="active site" evidence="1">
    <location>
        <position position="11"/>
    </location>
</feature>
<feature type="active site" evidence="1">
    <location>
        <position position="130"/>
    </location>
</feature>
<accession>B2JZM4</accession>
<comment type="function">
    <text evidence="1">IGPS catalyzes the conversion of PRFAR and glutamine to IGP, AICAR and glutamate. The HisF subunit catalyzes the cyclization activity that produces IGP and AICAR from PRFAR using the ammonia provided by the HisH subunit.</text>
</comment>
<comment type="catalytic activity">
    <reaction evidence="1">
        <text>5-[(5-phospho-1-deoxy-D-ribulos-1-ylimino)methylamino]-1-(5-phospho-beta-D-ribosyl)imidazole-4-carboxamide + L-glutamine = D-erythro-1-(imidazol-4-yl)glycerol 3-phosphate + 5-amino-1-(5-phospho-beta-D-ribosyl)imidazole-4-carboxamide + L-glutamate + H(+)</text>
        <dbReference type="Rhea" id="RHEA:24793"/>
        <dbReference type="ChEBI" id="CHEBI:15378"/>
        <dbReference type="ChEBI" id="CHEBI:29985"/>
        <dbReference type="ChEBI" id="CHEBI:58278"/>
        <dbReference type="ChEBI" id="CHEBI:58359"/>
        <dbReference type="ChEBI" id="CHEBI:58475"/>
        <dbReference type="ChEBI" id="CHEBI:58525"/>
        <dbReference type="EC" id="4.3.2.10"/>
    </reaction>
</comment>
<comment type="pathway">
    <text evidence="1">Amino-acid biosynthesis; L-histidine biosynthesis; L-histidine from 5-phospho-alpha-D-ribose 1-diphosphate: step 5/9.</text>
</comment>
<comment type="subunit">
    <text evidence="1">Heterodimer of HisH and HisF.</text>
</comment>
<comment type="subcellular location">
    <subcellularLocation>
        <location evidence="1">Cytoplasm</location>
    </subcellularLocation>
</comment>
<comment type="similarity">
    <text evidence="1">Belongs to the HisA/HisF family.</text>
</comment>
<dbReference type="EC" id="4.3.2.10" evidence="1"/>
<dbReference type="EMBL" id="CP001048">
    <property type="protein sequence ID" value="ACC88634.1"/>
    <property type="molecule type" value="Genomic_DNA"/>
</dbReference>
<dbReference type="RefSeq" id="WP_011192119.1">
    <property type="nucleotide sequence ID" value="NZ_CP009780.1"/>
</dbReference>
<dbReference type="SMR" id="B2JZM4"/>
<dbReference type="GeneID" id="49786358"/>
<dbReference type="KEGG" id="ypb:YPTS_1665"/>
<dbReference type="PATRIC" id="fig|502801.10.peg.1036"/>
<dbReference type="UniPathway" id="UPA00031">
    <property type="reaction ID" value="UER00010"/>
</dbReference>
<dbReference type="GO" id="GO:0005737">
    <property type="term" value="C:cytoplasm"/>
    <property type="evidence" value="ECO:0007669"/>
    <property type="project" value="UniProtKB-SubCell"/>
</dbReference>
<dbReference type="GO" id="GO:0000107">
    <property type="term" value="F:imidazoleglycerol-phosphate synthase activity"/>
    <property type="evidence" value="ECO:0007669"/>
    <property type="project" value="UniProtKB-UniRule"/>
</dbReference>
<dbReference type="GO" id="GO:0016829">
    <property type="term" value="F:lyase activity"/>
    <property type="evidence" value="ECO:0007669"/>
    <property type="project" value="UniProtKB-KW"/>
</dbReference>
<dbReference type="GO" id="GO:0000105">
    <property type="term" value="P:L-histidine biosynthetic process"/>
    <property type="evidence" value="ECO:0007669"/>
    <property type="project" value="UniProtKB-UniRule"/>
</dbReference>
<dbReference type="CDD" id="cd04731">
    <property type="entry name" value="HisF"/>
    <property type="match status" value="1"/>
</dbReference>
<dbReference type="FunFam" id="3.20.20.70:FF:000006">
    <property type="entry name" value="Imidazole glycerol phosphate synthase subunit HisF"/>
    <property type="match status" value="1"/>
</dbReference>
<dbReference type="Gene3D" id="3.20.20.70">
    <property type="entry name" value="Aldolase class I"/>
    <property type="match status" value="1"/>
</dbReference>
<dbReference type="HAMAP" id="MF_01013">
    <property type="entry name" value="HisF"/>
    <property type="match status" value="1"/>
</dbReference>
<dbReference type="InterPro" id="IPR013785">
    <property type="entry name" value="Aldolase_TIM"/>
</dbReference>
<dbReference type="InterPro" id="IPR006062">
    <property type="entry name" value="His_biosynth"/>
</dbReference>
<dbReference type="InterPro" id="IPR004651">
    <property type="entry name" value="HisF"/>
</dbReference>
<dbReference type="InterPro" id="IPR050064">
    <property type="entry name" value="IGPS_HisA/HisF"/>
</dbReference>
<dbReference type="InterPro" id="IPR011060">
    <property type="entry name" value="RibuloseP-bd_barrel"/>
</dbReference>
<dbReference type="NCBIfam" id="TIGR00735">
    <property type="entry name" value="hisF"/>
    <property type="match status" value="1"/>
</dbReference>
<dbReference type="PANTHER" id="PTHR21235:SF2">
    <property type="entry name" value="IMIDAZOLE GLYCEROL PHOSPHATE SYNTHASE HISHF"/>
    <property type="match status" value="1"/>
</dbReference>
<dbReference type="PANTHER" id="PTHR21235">
    <property type="entry name" value="IMIDAZOLE GLYCEROL PHOSPHATE SYNTHASE SUBUNIT HISF/H IGP SYNTHASE SUBUNIT HISF/H"/>
    <property type="match status" value="1"/>
</dbReference>
<dbReference type="Pfam" id="PF00977">
    <property type="entry name" value="His_biosynth"/>
    <property type="match status" value="1"/>
</dbReference>
<dbReference type="SUPFAM" id="SSF51366">
    <property type="entry name" value="Ribulose-phoshate binding barrel"/>
    <property type="match status" value="1"/>
</dbReference>
<proteinExistence type="inferred from homology"/>
<protein>
    <recommendedName>
        <fullName evidence="1">Imidazole glycerol phosphate synthase subunit HisF</fullName>
        <ecNumber evidence="1">4.3.2.10</ecNumber>
    </recommendedName>
    <alternativeName>
        <fullName evidence="1">IGP synthase cyclase subunit</fullName>
    </alternativeName>
    <alternativeName>
        <fullName evidence="1">IGP synthase subunit HisF</fullName>
    </alternativeName>
    <alternativeName>
        <fullName evidence="1">ImGP synthase subunit HisF</fullName>
        <shortName evidence="1">IGPS subunit HisF</shortName>
    </alternativeName>
</protein>
<reference key="1">
    <citation type="submission" date="2008-04" db="EMBL/GenBank/DDBJ databases">
        <title>Complete sequence of Yersinia pseudotuberculosis PB1/+.</title>
        <authorList>
            <person name="Copeland A."/>
            <person name="Lucas S."/>
            <person name="Lapidus A."/>
            <person name="Glavina del Rio T."/>
            <person name="Dalin E."/>
            <person name="Tice H."/>
            <person name="Bruce D."/>
            <person name="Goodwin L."/>
            <person name="Pitluck S."/>
            <person name="Munk A.C."/>
            <person name="Brettin T."/>
            <person name="Detter J.C."/>
            <person name="Han C."/>
            <person name="Tapia R."/>
            <person name="Schmutz J."/>
            <person name="Larimer F."/>
            <person name="Land M."/>
            <person name="Hauser L."/>
            <person name="Challacombe J.F."/>
            <person name="Green L."/>
            <person name="Lindler L.E."/>
            <person name="Nikolich M.P."/>
            <person name="Richardson P."/>
        </authorList>
    </citation>
    <scope>NUCLEOTIDE SEQUENCE [LARGE SCALE GENOMIC DNA]</scope>
    <source>
        <strain>PB1/+</strain>
    </source>
</reference>
<keyword id="KW-0028">Amino-acid biosynthesis</keyword>
<keyword id="KW-0963">Cytoplasm</keyword>
<keyword id="KW-0368">Histidine biosynthesis</keyword>
<keyword id="KW-0456">Lyase</keyword>